<organism>
    <name type="scientific">Chlorobium limicola (strain DSM 245 / NBRC 103803 / 6330)</name>
    <dbReference type="NCBI Taxonomy" id="290315"/>
    <lineage>
        <taxon>Bacteria</taxon>
        <taxon>Pseudomonadati</taxon>
        <taxon>Chlorobiota</taxon>
        <taxon>Chlorobiia</taxon>
        <taxon>Chlorobiales</taxon>
        <taxon>Chlorobiaceae</taxon>
        <taxon>Chlorobium/Pelodictyon group</taxon>
        <taxon>Chlorobium</taxon>
    </lineage>
</organism>
<reference key="1">
    <citation type="submission" date="2008-05" db="EMBL/GenBank/DDBJ databases">
        <title>Complete sequence of Chlorobium limicola DSM 245.</title>
        <authorList>
            <consortium name="US DOE Joint Genome Institute"/>
            <person name="Lucas S."/>
            <person name="Copeland A."/>
            <person name="Lapidus A."/>
            <person name="Glavina del Rio T."/>
            <person name="Dalin E."/>
            <person name="Tice H."/>
            <person name="Bruce D."/>
            <person name="Goodwin L."/>
            <person name="Pitluck S."/>
            <person name="Schmutz J."/>
            <person name="Larimer F."/>
            <person name="Land M."/>
            <person name="Hauser L."/>
            <person name="Kyrpides N."/>
            <person name="Ovchinnikova G."/>
            <person name="Zhao F."/>
            <person name="Li T."/>
            <person name="Liu Z."/>
            <person name="Overmann J."/>
            <person name="Bryant D.A."/>
            <person name="Richardson P."/>
        </authorList>
    </citation>
    <scope>NUCLEOTIDE SEQUENCE [LARGE SCALE GENOMIC DNA]</scope>
    <source>
        <strain>DSM 245 / NBRC 103803 / 6330</strain>
    </source>
</reference>
<evidence type="ECO:0000255" key="1">
    <source>
        <dbReference type="HAMAP-Rule" id="MF_00344"/>
    </source>
</evidence>
<name>GUAA_CHLL2</name>
<comment type="function">
    <text evidence="1">Catalyzes the synthesis of GMP from XMP.</text>
</comment>
<comment type="catalytic activity">
    <reaction evidence="1">
        <text>XMP + L-glutamine + ATP + H2O = GMP + L-glutamate + AMP + diphosphate + 2 H(+)</text>
        <dbReference type="Rhea" id="RHEA:11680"/>
        <dbReference type="ChEBI" id="CHEBI:15377"/>
        <dbReference type="ChEBI" id="CHEBI:15378"/>
        <dbReference type="ChEBI" id="CHEBI:29985"/>
        <dbReference type="ChEBI" id="CHEBI:30616"/>
        <dbReference type="ChEBI" id="CHEBI:33019"/>
        <dbReference type="ChEBI" id="CHEBI:57464"/>
        <dbReference type="ChEBI" id="CHEBI:58115"/>
        <dbReference type="ChEBI" id="CHEBI:58359"/>
        <dbReference type="ChEBI" id="CHEBI:456215"/>
        <dbReference type="EC" id="6.3.5.2"/>
    </reaction>
</comment>
<comment type="pathway">
    <text evidence="1">Purine metabolism; GMP biosynthesis; GMP from XMP (L-Gln route): step 1/1.</text>
</comment>
<comment type="subunit">
    <text evidence="1">Homodimer.</text>
</comment>
<gene>
    <name evidence="1" type="primary">guaA</name>
    <name type="ordered locus">Clim_0241</name>
</gene>
<proteinExistence type="inferred from homology"/>
<protein>
    <recommendedName>
        <fullName evidence="1">GMP synthase [glutamine-hydrolyzing]</fullName>
        <ecNumber evidence="1">6.3.5.2</ecNumber>
    </recommendedName>
    <alternativeName>
        <fullName evidence="1">GMP synthetase</fullName>
    </alternativeName>
    <alternativeName>
        <fullName evidence="1">Glutamine amidotransferase</fullName>
    </alternativeName>
</protein>
<sequence length="513" mass="56862">MQSVLVLDFGSQYTQLIARRIRELGIYSEILPYNTTPETIREHAPKAIILSGGPTSVYGESAILPHEGIFSLGLPILGICYGLQAIAKHFGGEVASSAKQEFGRAKMLVSRDGEPESMLFRNIPDSDVWMSHGDKVVNLPDGFRITASSANSEMCALETYGSKGALKVFGLQFHPEVQHTLYGKQLLSNFLIDIAGITPDWSPKHFIDHQIEEIRRTAGDETVICGISGGVDSSVAAVLVSRAIGKNLHCVFVDNGLLRKNEADKVMQFLKHLGLRLTLADASELFLKRLKNVASPEKKRKIIGRTFIQVFEEQLDKEKFLVQGTLYPDVIESVSVKGPSETIKSHHNVGGLPKRMKLKLIEPLRELFKDEVRAVGRELGIAEDILMRHPFPGPGLAVRVLGSVSKERLDILRDADEIFLEELKSSGLYQKVWQAFSVLLPVQSVGVMGDKRTYENVLALRAVESSDGMTADWAQLPHDFLARVSNRIINEVRGINRVAYDISSKPPATIEWE</sequence>
<keyword id="KW-0067">ATP-binding</keyword>
<keyword id="KW-0315">Glutamine amidotransferase</keyword>
<keyword id="KW-0332">GMP biosynthesis</keyword>
<keyword id="KW-0436">Ligase</keyword>
<keyword id="KW-0547">Nucleotide-binding</keyword>
<keyword id="KW-0658">Purine biosynthesis</keyword>
<dbReference type="EC" id="6.3.5.2" evidence="1"/>
<dbReference type="EMBL" id="CP001097">
    <property type="protein sequence ID" value="ACD89336.1"/>
    <property type="molecule type" value="Genomic_DNA"/>
</dbReference>
<dbReference type="RefSeq" id="WP_012465217.1">
    <property type="nucleotide sequence ID" value="NC_010803.1"/>
</dbReference>
<dbReference type="SMR" id="B3EEV3"/>
<dbReference type="STRING" id="290315.Clim_0241"/>
<dbReference type="KEGG" id="cli:Clim_0241"/>
<dbReference type="eggNOG" id="COG0518">
    <property type="taxonomic scope" value="Bacteria"/>
</dbReference>
<dbReference type="eggNOG" id="COG0519">
    <property type="taxonomic scope" value="Bacteria"/>
</dbReference>
<dbReference type="HOGENOM" id="CLU_014340_0_5_10"/>
<dbReference type="OrthoDB" id="9802219at2"/>
<dbReference type="UniPathway" id="UPA00189">
    <property type="reaction ID" value="UER00296"/>
</dbReference>
<dbReference type="Proteomes" id="UP000008841">
    <property type="component" value="Chromosome"/>
</dbReference>
<dbReference type="GO" id="GO:0005829">
    <property type="term" value="C:cytosol"/>
    <property type="evidence" value="ECO:0007669"/>
    <property type="project" value="TreeGrafter"/>
</dbReference>
<dbReference type="GO" id="GO:0005524">
    <property type="term" value="F:ATP binding"/>
    <property type="evidence" value="ECO:0007669"/>
    <property type="project" value="UniProtKB-UniRule"/>
</dbReference>
<dbReference type="GO" id="GO:0003921">
    <property type="term" value="F:GMP synthase activity"/>
    <property type="evidence" value="ECO:0007669"/>
    <property type="project" value="InterPro"/>
</dbReference>
<dbReference type="CDD" id="cd01742">
    <property type="entry name" value="GATase1_GMP_Synthase"/>
    <property type="match status" value="1"/>
</dbReference>
<dbReference type="CDD" id="cd01997">
    <property type="entry name" value="GMP_synthase_C"/>
    <property type="match status" value="1"/>
</dbReference>
<dbReference type="FunFam" id="3.30.300.10:FF:000002">
    <property type="entry name" value="GMP synthase [glutamine-hydrolyzing]"/>
    <property type="match status" value="1"/>
</dbReference>
<dbReference type="FunFam" id="3.40.50.620:FF:000001">
    <property type="entry name" value="GMP synthase [glutamine-hydrolyzing]"/>
    <property type="match status" value="1"/>
</dbReference>
<dbReference type="FunFam" id="3.40.50.880:FF:000001">
    <property type="entry name" value="GMP synthase [glutamine-hydrolyzing]"/>
    <property type="match status" value="1"/>
</dbReference>
<dbReference type="Gene3D" id="3.30.300.10">
    <property type="match status" value="1"/>
</dbReference>
<dbReference type="Gene3D" id="3.40.50.880">
    <property type="match status" value="1"/>
</dbReference>
<dbReference type="Gene3D" id="3.40.50.620">
    <property type="entry name" value="HUPs"/>
    <property type="match status" value="1"/>
</dbReference>
<dbReference type="HAMAP" id="MF_00344">
    <property type="entry name" value="GMP_synthase"/>
    <property type="match status" value="1"/>
</dbReference>
<dbReference type="InterPro" id="IPR029062">
    <property type="entry name" value="Class_I_gatase-like"/>
</dbReference>
<dbReference type="InterPro" id="IPR017926">
    <property type="entry name" value="GATASE"/>
</dbReference>
<dbReference type="InterPro" id="IPR001674">
    <property type="entry name" value="GMP_synth_C"/>
</dbReference>
<dbReference type="InterPro" id="IPR004739">
    <property type="entry name" value="GMP_synth_GATase"/>
</dbReference>
<dbReference type="InterPro" id="IPR022955">
    <property type="entry name" value="GMP_synthase"/>
</dbReference>
<dbReference type="InterPro" id="IPR025777">
    <property type="entry name" value="GMPS_ATP_PPase_dom"/>
</dbReference>
<dbReference type="InterPro" id="IPR022310">
    <property type="entry name" value="NAD/GMP_synthase"/>
</dbReference>
<dbReference type="InterPro" id="IPR014729">
    <property type="entry name" value="Rossmann-like_a/b/a_fold"/>
</dbReference>
<dbReference type="NCBIfam" id="TIGR00884">
    <property type="entry name" value="guaA_Cterm"/>
    <property type="match status" value="1"/>
</dbReference>
<dbReference type="NCBIfam" id="TIGR00888">
    <property type="entry name" value="guaA_Nterm"/>
    <property type="match status" value="1"/>
</dbReference>
<dbReference type="NCBIfam" id="NF000848">
    <property type="entry name" value="PRK00074.1"/>
    <property type="match status" value="1"/>
</dbReference>
<dbReference type="PANTHER" id="PTHR11922:SF2">
    <property type="entry name" value="GMP SYNTHASE [GLUTAMINE-HYDROLYZING]"/>
    <property type="match status" value="1"/>
</dbReference>
<dbReference type="PANTHER" id="PTHR11922">
    <property type="entry name" value="GMP SYNTHASE-RELATED"/>
    <property type="match status" value="1"/>
</dbReference>
<dbReference type="Pfam" id="PF00117">
    <property type="entry name" value="GATase"/>
    <property type="match status" value="1"/>
</dbReference>
<dbReference type="Pfam" id="PF00958">
    <property type="entry name" value="GMP_synt_C"/>
    <property type="match status" value="1"/>
</dbReference>
<dbReference type="Pfam" id="PF02540">
    <property type="entry name" value="NAD_synthase"/>
    <property type="match status" value="1"/>
</dbReference>
<dbReference type="PRINTS" id="PR00097">
    <property type="entry name" value="ANTSNTHASEII"/>
</dbReference>
<dbReference type="PRINTS" id="PR00096">
    <property type="entry name" value="GATASE"/>
</dbReference>
<dbReference type="SUPFAM" id="SSF52402">
    <property type="entry name" value="Adenine nucleotide alpha hydrolases-like"/>
    <property type="match status" value="1"/>
</dbReference>
<dbReference type="SUPFAM" id="SSF52317">
    <property type="entry name" value="Class I glutamine amidotransferase-like"/>
    <property type="match status" value="1"/>
</dbReference>
<dbReference type="SUPFAM" id="SSF54810">
    <property type="entry name" value="GMP synthetase C-terminal dimerisation domain"/>
    <property type="match status" value="1"/>
</dbReference>
<dbReference type="PROSITE" id="PS51273">
    <property type="entry name" value="GATASE_TYPE_1"/>
    <property type="match status" value="1"/>
</dbReference>
<dbReference type="PROSITE" id="PS51553">
    <property type="entry name" value="GMPS_ATP_PPASE"/>
    <property type="match status" value="1"/>
</dbReference>
<accession>B3EEV3</accession>
<feature type="chain" id="PRO_1000120252" description="GMP synthase [glutamine-hydrolyzing]">
    <location>
        <begin position="1"/>
        <end position="513"/>
    </location>
</feature>
<feature type="domain" description="Glutamine amidotransferase type-1" evidence="1">
    <location>
        <begin position="3"/>
        <end position="200"/>
    </location>
</feature>
<feature type="domain" description="GMPS ATP-PPase" evidence="1">
    <location>
        <begin position="201"/>
        <end position="388"/>
    </location>
</feature>
<feature type="active site" description="Nucleophile" evidence="1">
    <location>
        <position position="80"/>
    </location>
</feature>
<feature type="active site" evidence="1">
    <location>
        <position position="174"/>
    </location>
</feature>
<feature type="active site" evidence="1">
    <location>
        <position position="176"/>
    </location>
</feature>
<feature type="binding site" evidence="1">
    <location>
        <begin position="228"/>
        <end position="234"/>
    </location>
    <ligand>
        <name>ATP</name>
        <dbReference type="ChEBI" id="CHEBI:30616"/>
    </ligand>
</feature>